<comment type="similarity">
    <text evidence="1">Belongs to the poxviruses B9 family.</text>
</comment>
<gene>
    <name type="ORF">T4</name>
</gene>
<name>VT4_SHEVK</name>
<dbReference type="EMBL" id="M28824">
    <property type="protein sequence ID" value="AAC32896.1"/>
    <property type="molecule type" value="Genomic_DNA"/>
</dbReference>
<dbReference type="PIR" id="D33869">
    <property type="entry name" value="WMVZN4"/>
</dbReference>
<dbReference type="SMR" id="P18386"/>
<dbReference type="Gene3D" id="2.60.240.30">
    <property type="match status" value="1"/>
</dbReference>
<dbReference type="InterPro" id="IPR016399">
    <property type="entry name" value="Apoptosis_reg_M-T4"/>
</dbReference>
<dbReference type="InterPro" id="IPR038687">
    <property type="entry name" value="M-T4_sf"/>
</dbReference>
<dbReference type="InterPro" id="IPR007579">
    <property type="entry name" value="Poxvirus_T4p_C"/>
</dbReference>
<dbReference type="InterPro" id="IPR007580">
    <property type="entry name" value="Poxvirus_T4p_N"/>
</dbReference>
<dbReference type="Pfam" id="PF04490">
    <property type="entry name" value="Pox_T4_C"/>
    <property type="match status" value="1"/>
</dbReference>
<dbReference type="Pfam" id="PF04491">
    <property type="entry name" value="Pox_T4_N"/>
    <property type="match status" value="1"/>
</dbReference>
<dbReference type="PIRSF" id="PIRSF003796">
    <property type="entry name" value="Apoptosisregulator_M-T4"/>
    <property type="match status" value="1"/>
</dbReference>
<proteinExistence type="inferred from homology"/>
<feature type="chain" id="PRO_0000099360" description="T4 protein">
    <location>
        <begin position="1"/>
        <end position="240"/>
    </location>
</feature>
<accession>P18386</accession>
<evidence type="ECO:0000305" key="1"/>
<sequence length="240" mass="27459">MSSLTLFIFFLQLFIFTSSVSGISIKRCTEEENNTWEIEVGLCIQTENFRAIKTGCYKIQGPGGLLTEGNGFKIFAHDDCSKEETQNNFILDSVNKAVYALGKYVYMEISTSNITTLYSLPQCAKRISLSISCDQVTTEMKSYVESVSFKDYDLEFVITTDISCVKHVSSSVIVRNECEKKYISTGKKIFGFNNKIDCSAVKFSEHVNYLKTCSVGKFDRKKYYEHQHNYIKKIFHHNEL</sequence>
<organism>
    <name type="scientific">Sheeppox virus (strain KS-1)</name>
    <name type="common">SPPV</name>
    <name type="synonym">Capripoxvirus (strain KS-1)</name>
    <dbReference type="NCBI Taxonomy" id="10269"/>
    <lineage>
        <taxon>Viruses</taxon>
        <taxon>Varidnaviria</taxon>
        <taxon>Bamfordvirae</taxon>
        <taxon>Nucleocytoviricota</taxon>
        <taxon>Pokkesviricetes</taxon>
        <taxon>Chitovirales</taxon>
        <taxon>Poxviridae</taxon>
        <taxon>Chordopoxvirinae</taxon>
        <taxon>Capripoxvirus</taxon>
        <taxon>Sheeppox virus</taxon>
    </lineage>
</organism>
<reference key="1">
    <citation type="journal article" date="1989" name="Virology">
        <title>A capripoxvirus pseudogene whose only intact homologs are in other poxvirus genomes.</title>
        <authorList>
            <person name="Gershon P.D."/>
            <person name="Black D.N."/>
        </authorList>
    </citation>
    <scope>NUCLEOTIDE SEQUENCE [GENOMIC DNA]</scope>
</reference>
<protein>
    <recommendedName>
        <fullName>T4 protein</fullName>
    </recommendedName>
</protein>
<organismHost>
    <name type="scientific">Ovis aries</name>
    <name type="common">Sheep</name>
    <dbReference type="NCBI Taxonomy" id="9940"/>
</organismHost>